<dbReference type="EMBL" id="X67744">
    <property type="protein sequence ID" value="CAA47969.1"/>
    <property type="molecule type" value="Genomic_DNA"/>
</dbReference>
<dbReference type="RefSeq" id="WP_047172113.1">
    <property type="nucleotide sequence ID" value="NZ_LN554884.1"/>
</dbReference>
<dbReference type="SMR" id="P74892"/>
<dbReference type="STRING" id="1288.AWC37_07655"/>
<dbReference type="KEGG" id="sxo:SXYL_00886"/>
<dbReference type="eggNOG" id="COG1609">
    <property type="taxonomic scope" value="Bacteria"/>
</dbReference>
<dbReference type="GO" id="GO:0003700">
    <property type="term" value="F:DNA-binding transcription factor activity"/>
    <property type="evidence" value="ECO:0007669"/>
    <property type="project" value="TreeGrafter"/>
</dbReference>
<dbReference type="GO" id="GO:0000976">
    <property type="term" value="F:transcription cis-regulatory region binding"/>
    <property type="evidence" value="ECO:0007669"/>
    <property type="project" value="TreeGrafter"/>
</dbReference>
<dbReference type="CDD" id="cd01392">
    <property type="entry name" value="HTH_LacI"/>
    <property type="match status" value="1"/>
</dbReference>
<dbReference type="CDD" id="cd01542">
    <property type="entry name" value="PBP1_TreR-like"/>
    <property type="match status" value="1"/>
</dbReference>
<dbReference type="Gene3D" id="3.40.50.2300">
    <property type="match status" value="2"/>
</dbReference>
<dbReference type="Gene3D" id="1.10.260.40">
    <property type="entry name" value="lambda repressor-like DNA-binding domains"/>
    <property type="match status" value="1"/>
</dbReference>
<dbReference type="InterPro" id="IPR000843">
    <property type="entry name" value="HTH_LacI"/>
</dbReference>
<dbReference type="InterPro" id="IPR010982">
    <property type="entry name" value="Lambda_DNA-bd_dom_sf"/>
</dbReference>
<dbReference type="InterPro" id="IPR028082">
    <property type="entry name" value="Peripla_BP_I"/>
</dbReference>
<dbReference type="InterPro" id="IPR025997">
    <property type="entry name" value="SBP_2_dom"/>
</dbReference>
<dbReference type="PANTHER" id="PTHR30146">
    <property type="entry name" value="LACI-RELATED TRANSCRIPTIONAL REPRESSOR"/>
    <property type="match status" value="1"/>
</dbReference>
<dbReference type="PANTHER" id="PTHR30146:SF154">
    <property type="entry name" value="TRANSCRIPTION REGULATOR, MEMBER OF GALR FAMILY"/>
    <property type="match status" value="1"/>
</dbReference>
<dbReference type="Pfam" id="PF00356">
    <property type="entry name" value="LacI"/>
    <property type="match status" value="1"/>
</dbReference>
<dbReference type="Pfam" id="PF13407">
    <property type="entry name" value="Peripla_BP_4"/>
    <property type="match status" value="1"/>
</dbReference>
<dbReference type="PRINTS" id="PR00036">
    <property type="entry name" value="HTHLACI"/>
</dbReference>
<dbReference type="SMART" id="SM00354">
    <property type="entry name" value="HTH_LACI"/>
    <property type="match status" value="1"/>
</dbReference>
<dbReference type="SUPFAM" id="SSF47413">
    <property type="entry name" value="lambda repressor-like DNA-binding domains"/>
    <property type="match status" value="1"/>
</dbReference>
<dbReference type="SUPFAM" id="SSF53822">
    <property type="entry name" value="Periplasmic binding protein-like I"/>
    <property type="match status" value="1"/>
</dbReference>
<dbReference type="PROSITE" id="PS00356">
    <property type="entry name" value="HTH_LACI_1"/>
    <property type="match status" value="1"/>
</dbReference>
<dbReference type="PROSITE" id="PS50932">
    <property type="entry name" value="HTH_LACI_2"/>
    <property type="match status" value="1"/>
</dbReference>
<reference key="1">
    <citation type="journal article" date="1996" name="J. Bacteriol.">
        <title>Transcriptional regulation of the sucrase gene of Staphylococcus xylosus by the repressor ScrR.</title>
        <authorList>
            <person name="Gering M."/>
            <person name="Brueckner R."/>
        </authorList>
    </citation>
    <scope>NUCLEOTIDE SEQUENCE [GENOMIC DNA]</scope>
    <source>
        <strain>DSM 20267 / Isolate C2A</strain>
    </source>
</reference>
<comment type="function">
    <text>Negative regulator of scrB expression.</text>
</comment>
<protein>
    <recommendedName>
        <fullName>Sucrose operon repressor</fullName>
    </recommendedName>
    <alternativeName>
        <fullName>Scr operon regulatory protein</fullName>
    </alternativeName>
</protein>
<evidence type="ECO:0000255" key="1">
    <source>
        <dbReference type="PROSITE-ProRule" id="PRU00111"/>
    </source>
</evidence>
<name>SCRR_STAXY</name>
<keyword id="KW-0238">DNA-binding</keyword>
<keyword id="KW-0678">Repressor</keyword>
<keyword id="KW-0804">Transcription</keyword>
<keyword id="KW-0805">Transcription regulation</keyword>
<accession>P74892</accession>
<feature type="chain" id="PRO_0000108002" description="Sucrose operon repressor">
    <location>
        <begin position="1"/>
        <end position="320"/>
    </location>
</feature>
<feature type="domain" description="HTH lacI-type" evidence="1">
    <location>
        <begin position="1"/>
        <end position="55"/>
    </location>
</feature>
<feature type="DNA-binding region" description="H-T-H motif" evidence="1">
    <location>
        <begin position="4"/>
        <end position="23"/>
    </location>
</feature>
<organism>
    <name type="scientific">Staphylococcus xylosus</name>
    <dbReference type="NCBI Taxonomy" id="1288"/>
    <lineage>
        <taxon>Bacteria</taxon>
        <taxon>Bacillati</taxon>
        <taxon>Bacillota</taxon>
        <taxon>Bacilli</taxon>
        <taxon>Bacillales</taxon>
        <taxon>Staphylococcaceae</taxon>
        <taxon>Staphylococcus</taxon>
    </lineage>
</organism>
<gene>
    <name type="primary">scrR</name>
</gene>
<sequence>MKNIADIAKIAGVSKSTVSRYLNNGSVSLKTQQKLDEIIRENDYQPNQFAQSLRARRTNMIGAIIPRMNSFAVDETIKGVKTVCDQLNYSLLLNYTNLNIQLEIDALETFYRSKVDGIVFMATEITDQHLEVINKINVPVIIVGQAHDDLHCIIHNDYQAGYLVGDMLGQQGYNDIKFFGVTESDIAVGVQRKEGLIAGLEAHNIQPEISLTSFNYQEAMVDVVEALQAYPHYDAIVGATDSIALAIHKYNSEHKPHAHEKYIVGFGGDPVTDIVSPSIHTINYNFEYAGSVAMDKLNQMIQHQVIEQRIIIDVEQSFEN</sequence>
<proteinExistence type="predicted"/>